<comment type="function">
    <text evidence="1">Involved in transcription antitermination. Required for transcription of ribosomal RNA (rRNA) genes. Binds specifically to the boxA antiterminator sequence of the ribosomal RNA (rrn) operons.</text>
</comment>
<comment type="similarity">
    <text evidence="1">Belongs to the NusB family.</text>
</comment>
<dbReference type="EMBL" id="BA000016">
    <property type="protein sequence ID" value="BAB81530.1"/>
    <property type="molecule type" value="Genomic_DNA"/>
</dbReference>
<dbReference type="RefSeq" id="WP_003451187.1">
    <property type="nucleotide sequence ID" value="NC_003366.1"/>
</dbReference>
<dbReference type="SMR" id="Q8XJD6"/>
<dbReference type="STRING" id="195102.gene:10491088"/>
<dbReference type="GeneID" id="93001641"/>
<dbReference type="KEGG" id="cpe:CPE1824"/>
<dbReference type="HOGENOM" id="CLU_087843_3_1_9"/>
<dbReference type="Proteomes" id="UP000000818">
    <property type="component" value="Chromosome"/>
</dbReference>
<dbReference type="GO" id="GO:0005829">
    <property type="term" value="C:cytosol"/>
    <property type="evidence" value="ECO:0007669"/>
    <property type="project" value="TreeGrafter"/>
</dbReference>
<dbReference type="GO" id="GO:0003723">
    <property type="term" value="F:RNA binding"/>
    <property type="evidence" value="ECO:0007669"/>
    <property type="project" value="UniProtKB-UniRule"/>
</dbReference>
<dbReference type="GO" id="GO:0006353">
    <property type="term" value="P:DNA-templated transcription termination"/>
    <property type="evidence" value="ECO:0007669"/>
    <property type="project" value="UniProtKB-UniRule"/>
</dbReference>
<dbReference type="GO" id="GO:0031564">
    <property type="term" value="P:transcription antitermination"/>
    <property type="evidence" value="ECO:0007669"/>
    <property type="project" value="UniProtKB-KW"/>
</dbReference>
<dbReference type="Gene3D" id="1.10.940.10">
    <property type="entry name" value="NusB-like"/>
    <property type="match status" value="1"/>
</dbReference>
<dbReference type="HAMAP" id="MF_00073">
    <property type="entry name" value="NusB"/>
    <property type="match status" value="1"/>
</dbReference>
<dbReference type="InterPro" id="IPR035926">
    <property type="entry name" value="NusB-like_sf"/>
</dbReference>
<dbReference type="InterPro" id="IPR011605">
    <property type="entry name" value="NusB_fam"/>
</dbReference>
<dbReference type="InterPro" id="IPR006027">
    <property type="entry name" value="NusB_RsmB_TIM44"/>
</dbReference>
<dbReference type="NCBIfam" id="TIGR01951">
    <property type="entry name" value="nusB"/>
    <property type="match status" value="1"/>
</dbReference>
<dbReference type="PANTHER" id="PTHR11078:SF3">
    <property type="entry name" value="ANTITERMINATION NUSB DOMAIN-CONTAINING PROTEIN"/>
    <property type="match status" value="1"/>
</dbReference>
<dbReference type="PANTHER" id="PTHR11078">
    <property type="entry name" value="N UTILIZATION SUBSTANCE PROTEIN B-RELATED"/>
    <property type="match status" value="1"/>
</dbReference>
<dbReference type="Pfam" id="PF01029">
    <property type="entry name" value="NusB"/>
    <property type="match status" value="1"/>
</dbReference>
<dbReference type="SUPFAM" id="SSF48013">
    <property type="entry name" value="NusB-like"/>
    <property type="match status" value="1"/>
</dbReference>
<keyword id="KW-1185">Reference proteome</keyword>
<keyword id="KW-0694">RNA-binding</keyword>
<keyword id="KW-0804">Transcription</keyword>
<keyword id="KW-0889">Transcription antitermination</keyword>
<keyword id="KW-0805">Transcription regulation</keyword>
<evidence type="ECO:0000255" key="1">
    <source>
        <dbReference type="HAMAP-Rule" id="MF_00073"/>
    </source>
</evidence>
<protein>
    <recommendedName>
        <fullName evidence="1">Transcription antitermination protein NusB</fullName>
    </recommendedName>
    <alternativeName>
        <fullName evidence="1">Antitermination factor NusB</fullName>
    </alternativeName>
</protein>
<reference key="1">
    <citation type="journal article" date="2002" name="Proc. Natl. Acad. Sci. U.S.A.">
        <title>Complete genome sequence of Clostridium perfringens, an anaerobic flesh-eater.</title>
        <authorList>
            <person name="Shimizu T."/>
            <person name="Ohtani K."/>
            <person name="Hirakawa H."/>
            <person name="Ohshima K."/>
            <person name="Yamashita A."/>
            <person name="Shiba T."/>
            <person name="Ogasawara N."/>
            <person name="Hattori M."/>
            <person name="Kuhara S."/>
            <person name="Hayashi H."/>
        </authorList>
    </citation>
    <scope>NUCLEOTIDE SEQUENCE [LARGE SCALE GENOMIC DNA]</scope>
    <source>
        <strain>13 / Type A</strain>
    </source>
</reference>
<accession>Q8XJD6</accession>
<name>NUSB_CLOPE</name>
<feature type="chain" id="PRO_0000176530" description="Transcription antitermination protein NusB">
    <location>
        <begin position="1"/>
        <end position="135"/>
    </location>
</feature>
<gene>
    <name evidence="1" type="primary">nusB</name>
    <name type="ordered locus">CPE1824</name>
</gene>
<proteinExistence type="inferred from homology"/>
<sequence>MNRVKSREYLLQLAYQMEITSETALETFNSFMENEDISKDDLDLAYIKSGLLGIEENKEKLDSLIESQLVKWKLNRISKVNLSILRISTYEILFAEDVPGKVSINEAIELCKKYSDNKSVSFINGVLDKVYKNMQ</sequence>
<organism>
    <name type="scientific">Clostridium perfringens (strain 13 / Type A)</name>
    <dbReference type="NCBI Taxonomy" id="195102"/>
    <lineage>
        <taxon>Bacteria</taxon>
        <taxon>Bacillati</taxon>
        <taxon>Bacillota</taxon>
        <taxon>Clostridia</taxon>
        <taxon>Eubacteriales</taxon>
        <taxon>Clostridiaceae</taxon>
        <taxon>Clostridium</taxon>
    </lineage>
</organism>